<protein>
    <recommendedName>
        <fullName evidence="1">Single-stranded DNA-binding protein</fullName>
        <shortName evidence="1">SSB</shortName>
    </recommendedName>
</protein>
<accession>Q8EWT6</accession>
<sequence>MNKVFIVGRLAQDPQQFVTQNGITQSRISIASSDNWNKNETYFFPCVAWQSTANFINSYLHKGDLVAIDGKLIRRSYVSKEGKTVYVIEIVIESIKPLSSKNSNNAASSIDKNYNPTNTKNNNYSQQSNMSVSEAMDDFESNFAQKTSSTNITSKNEEKETFKDDPFALNDDEDPDQVVSLDWLDEFKE</sequence>
<reference key="1">
    <citation type="journal article" date="2002" name="Nucleic Acids Res.">
        <title>The complete genomic sequence of Mycoplasma penetrans, an intracellular bacterial pathogen in humans.</title>
        <authorList>
            <person name="Sasaki Y."/>
            <person name="Ishikawa J."/>
            <person name="Yamashita A."/>
            <person name="Oshima K."/>
            <person name="Kenri T."/>
            <person name="Furuya K."/>
            <person name="Yoshino C."/>
            <person name="Horino A."/>
            <person name="Shiba T."/>
            <person name="Sasaki T."/>
            <person name="Hattori M."/>
        </authorList>
    </citation>
    <scope>NUCLEOTIDE SEQUENCE [LARGE SCALE GENOMIC DNA]</scope>
    <source>
        <strain>HF-2</strain>
    </source>
</reference>
<organism>
    <name type="scientific">Malacoplasma penetrans (strain HF-2)</name>
    <name type="common">Mycoplasma penetrans</name>
    <dbReference type="NCBI Taxonomy" id="272633"/>
    <lineage>
        <taxon>Bacteria</taxon>
        <taxon>Bacillati</taxon>
        <taxon>Mycoplasmatota</taxon>
        <taxon>Mycoplasmoidales</taxon>
        <taxon>Mycoplasmoidaceae</taxon>
        <taxon>Malacoplasma</taxon>
    </lineage>
</organism>
<gene>
    <name type="primary">ssb</name>
    <name type="ordered locus">MYPE1150</name>
</gene>
<proteinExistence type="inferred from homology"/>
<feature type="chain" id="PRO_0000096063" description="Single-stranded DNA-binding protein">
    <location>
        <begin position="1"/>
        <end position="189"/>
    </location>
</feature>
<feature type="domain" description="SSB" evidence="1">
    <location>
        <begin position="1"/>
        <end position="99"/>
    </location>
</feature>
<feature type="region of interest" description="Disordered" evidence="2">
    <location>
        <begin position="100"/>
        <end position="126"/>
    </location>
</feature>
<feature type="region of interest" description="Disordered" evidence="2">
    <location>
        <begin position="143"/>
        <end position="176"/>
    </location>
</feature>
<feature type="compositionally biased region" description="Low complexity" evidence="2">
    <location>
        <begin position="100"/>
        <end position="124"/>
    </location>
</feature>
<feature type="compositionally biased region" description="Polar residues" evidence="2">
    <location>
        <begin position="143"/>
        <end position="154"/>
    </location>
</feature>
<feature type="compositionally biased region" description="Basic and acidic residues" evidence="2">
    <location>
        <begin position="155"/>
        <end position="166"/>
    </location>
</feature>
<dbReference type="EMBL" id="BA000026">
    <property type="protein sequence ID" value="BAC43907.1"/>
    <property type="molecule type" value="Genomic_DNA"/>
</dbReference>
<dbReference type="RefSeq" id="WP_011076943.1">
    <property type="nucleotide sequence ID" value="NC_004432.1"/>
</dbReference>
<dbReference type="SMR" id="Q8EWT6"/>
<dbReference type="FunCoup" id="Q8EWT6">
    <property type="interactions" value="250"/>
</dbReference>
<dbReference type="STRING" id="272633.gene:10731208"/>
<dbReference type="KEGG" id="mpe:MYPE1150"/>
<dbReference type="eggNOG" id="COG0629">
    <property type="taxonomic scope" value="Bacteria"/>
</dbReference>
<dbReference type="HOGENOM" id="CLU_078758_6_0_14"/>
<dbReference type="InParanoid" id="Q8EWT6"/>
<dbReference type="Proteomes" id="UP000002522">
    <property type="component" value="Chromosome"/>
</dbReference>
<dbReference type="GO" id="GO:0009295">
    <property type="term" value="C:nucleoid"/>
    <property type="evidence" value="ECO:0007669"/>
    <property type="project" value="TreeGrafter"/>
</dbReference>
<dbReference type="GO" id="GO:0003697">
    <property type="term" value="F:single-stranded DNA binding"/>
    <property type="evidence" value="ECO:0007669"/>
    <property type="project" value="UniProtKB-UniRule"/>
</dbReference>
<dbReference type="GO" id="GO:0006260">
    <property type="term" value="P:DNA replication"/>
    <property type="evidence" value="ECO:0007669"/>
    <property type="project" value="InterPro"/>
</dbReference>
<dbReference type="CDD" id="cd04496">
    <property type="entry name" value="SSB_OBF"/>
    <property type="match status" value="1"/>
</dbReference>
<dbReference type="Gene3D" id="2.40.50.140">
    <property type="entry name" value="Nucleic acid-binding proteins"/>
    <property type="match status" value="1"/>
</dbReference>
<dbReference type="HAMAP" id="MF_00984">
    <property type="entry name" value="SSB"/>
    <property type="match status" value="1"/>
</dbReference>
<dbReference type="InterPro" id="IPR012340">
    <property type="entry name" value="NA-bd_OB-fold"/>
</dbReference>
<dbReference type="InterPro" id="IPR000424">
    <property type="entry name" value="Primosome_PriB/ssb"/>
</dbReference>
<dbReference type="InterPro" id="IPR011344">
    <property type="entry name" value="ssDNA-bd"/>
</dbReference>
<dbReference type="NCBIfam" id="TIGR00621">
    <property type="entry name" value="ssb"/>
    <property type="match status" value="1"/>
</dbReference>
<dbReference type="PANTHER" id="PTHR10302">
    <property type="entry name" value="SINGLE-STRANDED DNA-BINDING PROTEIN"/>
    <property type="match status" value="1"/>
</dbReference>
<dbReference type="PANTHER" id="PTHR10302:SF27">
    <property type="entry name" value="SINGLE-STRANDED DNA-BINDING PROTEIN"/>
    <property type="match status" value="1"/>
</dbReference>
<dbReference type="Pfam" id="PF00436">
    <property type="entry name" value="SSB"/>
    <property type="match status" value="1"/>
</dbReference>
<dbReference type="SUPFAM" id="SSF50249">
    <property type="entry name" value="Nucleic acid-binding proteins"/>
    <property type="match status" value="1"/>
</dbReference>
<dbReference type="PROSITE" id="PS50935">
    <property type="entry name" value="SSB"/>
    <property type="match status" value="1"/>
</dbReference>
<comment type="subunit">
    <text evidence="1">Homotetramer.</text>
</comment>
<evidence type="ECO:0000255" key="1">
    <source>
        <dbReference type="HAMAP-Rule" id="MF_00984"/>
    </source>
</evidence>
<evidence type="ECO:0000256" key="2">
    <source>
        <dbReference type="SAM" id="MobiDB-lite"/>
    </source>
</evidence>
<name>SSB_MALP2</name>
<keyword id="KW-0238">DNA-binding</keyword>
<keyword id="KW-1185">Reference proteome</keyword>